<accession>A0AK37</accession>
<comment type="catalytic activity">
    <reaction evidence="1">
        <text>L-histidinol phosphate + 2-oxoglutarate = 3-(imidazol-4-yl)-2-oxopropyl phosphate + L-glutamate</text>
        <dbReference type="Rhea" id="RHEA:23744"/>
        <dbReference type="ChEBI" id="CHEBI:16810"/>
        <dbReference type="ChEBI" id="CHEBI:29985"/>
        <dbReference type="ChEBI" id="CHEBI:57766"/>
        <dbReference type="ChEBI" id="CHEBI:57980"/>
        <dbReference type="EC" id="2.6.1.9"/>
    </reaction>
</comment>
<comment type="cofactor">
    <cofactor evidence="1">
        <name>pyridoxal 5'-phosphate</name>
        <dbReference type="ChEBI" id="CHEBI:597326"/>
    </cofactor>
</comment>
<comment type="pathway">
    <text evidence="1">Amino-acid biosynthesis; L-histidine biosynthesis; L-histidine from 5-phospho-alpha-D-ribose 1-diphosphate: step 7/9.</text>
</comment>
<comment type="subunit">
    <text evidence="1">Homodimer.</text>
</comment>
<comment type="similarity">
    <text evidence="1">Belongs to the class-II pyridoxal-phosphate-dependent aminotransferase family. Histidinol-phosphate aminotransferase subfamily.</text>
</comment>
<feature type="chain" id="PRO_1000063482" description="Histidinol-phosphate aminotransferase">
    <location>
        <begin position="1"/>
        <end position="360"/>
    </location>
</feature>
<feature type="modified residue" description="N6-(pyridoxal phosphate)lysine" evidence="1">
    <location>
        <position position="222"/>
    </location>
</feature>
<reference key="1">
    <citation type="journal article" date="2006" name="J. Bacteriol.">
        <title>Whole-genome sequence of Listeria welshimeri reveals common steps in genome reduction with Listeria innocua as compared to Listeria monocytogenes.</title>
        <authorList>
            <person name="Hain T."/>
            <person name="Steinweg C."/>
            <person name="Kuenne C.T."/>
            <person name="Billion A."/>
            <person name="Ghai R."/>
            <person name="Chatterjee S.S."/>
            <person name="Domann E."/>
            <person name="Kaerst U."/>
            <person name="Goesmann A."/>
            <person name="Bekel T."/>
            <person name="Bartels D."/>
            <person name="Kaiser O."/>
            <person name="Meyer F."/>
            <person name="Puehler A."/>
            <person name="Weisshaar B."/>
            <person name="Wehland J."/>
            <person name="Liang C."/>
            <person name="Dandekar T."/>
            <person name="Lampidis R."/>
            <person name="Kreft J."/>
            <person name="Goebel W."/>
            <person name="Chakraborty T."/>
        </authorList>
    </citation>
    <scope>NUCLEOTIDE SEQUENCE [LARGE SCALE GENOMIC DNA]</scope>
    <source>
        <strain>ATCC 35897 / DSM 20650 / CCUG 15529 / CIP 8149 / NCTC 11857 / SLCC 5334 / V8</strain>
    </source>
</reference>
<sequence length="360" mass="39939">MKWKKSLTGLSSYKPGKREEEVMAELGLTEITKLSSNENPLGTSPKVAAMQANSCVETEIYPDGWASSLRKEVAAFYQLEEEELIFTAGVDELIELLTRVLLDNTTNTVMATPTFVQYRQNALIEGAEVKEIPLLADGEHNLEGMLDAIDEKTTIVWICNPNNPTGNYIELADIQAFLDKVPSDVLVVLDEAYIEYVTPQPEKHEKLIRTYKNVIITRTFSKIYGLASARVGYGIADKEIINQLNIVRPPFNTTSIGQKLAIEAIKDQAFIEACRTSNANGIKQYEAFAKRFEQVKLYPANGNFVLIDLGIEAGTIFSYLEKNGYITRSGAALGFPTAVRITIGKEEENSAVIALLEKLL</sequence>
<gene>
    <name evidence="1" type="primary">hisC</name>
    <name type="ordered locus">lwe1951</name>
</gene>
<organism>
    <name type="scientific">Listeria welshimeri serovar 6b (strain ATCC 35897 / DSM 20650 / CCUG 15529 / CIP 8149 / NCTC 11857 / SLCC 5334 / V8)</name>
    <dbReference type="NCBI Taxonomy" id="386043"/>
    <lineage>
        <taxon>Bacteria</taxon>
        <taxon>Bacillati</taxon>
        <taxon>Bacillota</taxon>
        <taxon>Bacilli</taxon>
        <taxon>Bacillales</taxon>
        <taxon>Listeriaceae</taxon>
        <taxon>Listeria</taxon>
    </lineage>
</organism>
<dbReference type="EC" id="2.6.1.9" evidence="1"/>
<dbReference type="EMBL" id="AM263198">
    <property type="protein sequence ID" value="CAK21369.1"/>
    <property type="molecule type" value="Genomic_DNA"/>
</dbReference>
<dbReference type="RefSeq" id="WP_011702717.1">
    <property type="nucleotide sequence ID" value="NC_008555.1"/>
</dbReference>
<dbReference type="SMR" id="A0AK37"/>
<dbReference type="STRING" id="386043.lwe1951"/>
<dbReference type="GeneID" id="61189851"/>
<dbReference type="KEGG" id="lwe:lwe1951"/>
<dbReference type="eggNOG" id="COG0079">
    <property type="taxonomic scope" value="Bacteria"/>
</dbReference>
<dbReference type="HOGENOM" id="CLU_017584_3_3_9"/>
<dbReference type="OrthoDB" id="9813612at2"/>
<dbReference type="UniPathway" id="UPA00031">
    <property type="reaction ID" value="UER00012"/>
</dbReference>
<dbReference type="Proteomes" id="UP000000779">
    <property type="component" value="Chromosome"/>
</dbReference>
<dbReference type="GO" id="GO:0004400">
    <property type="term" value="F:histidinol-phosphate transaminase activity"/>
    <property type="evidence" value="ECO:0007669"/>
    <property type="project" value="UniProtKB-UniRule"/>
</dbReference>
<dbReference type="GO" id="GO:0030170">
    <property type="term" value="F:pyridoxal phosphate binding"/>
    <property type="evidence" value="ECO:0007669"/>
    <property type="project" value="InterPro"/>
</dbReference>
<dbReference type="GO" id="GO:0000105">
    <property type="term" value="P:L-histidine biosynthetic process"/>
    <property type="evidence" value="ECO:0007669"/>
    <property type="project" value="UniProtKB-UniRule"/>
</dbReference>
<dbReference type="CDD" id="cd00609">
    <property type="entry name" value="AAT_like"/>
    <property type="match status" value="1"/>
</dbReference>
<dbReference type="Gene3D" id="3.90.1150.10">
    <property type="entry name" value="Aspartate Aminotransferase, domain 1"/>
    <property type="match status" value="1"/>
</dbReference>
<dbReference type="Gene3D" id="3.40.640.10">
    <property type="entry name" value="Type I PLP-dependent aspartate aminotransferase-like (Major domain)"/>
    <property type="match status" value="1"/>
</dbReference>
<dbReference type="HAMAP" id="MF_01023">
    <property type="entry name" value="HisC_aminotrans_2"/>
    <property type="match status" value="1"/>
</dbReference>
<dbReference type="InterPro" id="IPR004839">
    <property type="entry name" value="Aminotransferase_I/II_large"/>
</dbReference>
<dbReference type="InterPro" id="IPR005861">
    <property type="entry name" value="HisP_aminotrans"/>
</dbReference>
<dbReference type="InterPro" id="IPR050106">
    <property type="entry name" value="HistidinolP_aminotransfase"/>
</dbReference>
<dbReference type="InterPro" id="IPR015424">
    <property type="entry name" value="PyrdxlP-dep_Trfase"/>
</dbReference>
<dbReference type="InterPro" id="IPR015421">
    <property type="entry name" value="PyrdxlP-dep_Trfase_major"/>
</dbReference>
<dbReference type="InterPro" id="IPR015422">
    <property type="entry name" value="PyrdxlP-dep_Trfase_small"/>
</dbReference>
<dbReference type="NCBIfam" id="TIGR01141">
    <property type="entry name" value="hisC"/>
    <property type="match status" value="1"/>
</dbReference>
<dbReference type="PANTHER" id="PTHR43643:SF3">
    <property type="entry name" value="HISTIDINOL-PHOSPHATE AMINOTRANSFERASE"/>
    <property type="match status" value="1"/>
</dbReference>
<dbReference type="PANTHER" id="PTHR43643">
    <property type="entry name" value="HISTIDINOL-PHOSPHATE AMINOTRANSFERASE 2"/>
    <property type="match status" value="1"/>
</dbReference>
<dbReference type="Pfam" id="PF00155">
    <property type="entry name" value="Aminotran_1_2"/>
    <property type="match status" value="1"/>
</dbReference>
<dbReference type="SUPFAM" id="SSF53383">
    <property type="entry name" value="PLP-dependent transferases"/>
    <property type="match status" value="1"/>
</dbReference>
<evidence type="ECO:0000255" key="1">
    <source>
        <dbReference type="HAMAP-Rule" id="MF_01023"/>
    </source>
</evidence>
<proteinExistence type="inferred from homology"/>
<name>HIS8_LISW6</name>
<protein>
    <recommendedName>
        <fullName evidence="1">Histidinol-phosphate aminotransferase</fullName>
        <ecNumber evidence="1">2.6.1.9</ecNumber>
    </recommendedName>
    <alternativeName>
        <fullName evidence="1">Imidazole acetol-phosphate transaminase</fullName>
    </alternativeName>
</protein>
<keyword id="KW-0028">Amino-acid biosynthesis</keyword>
<keyword id="KW-0032">Aminotransferase</keyword>
<keyword id="KW-0368">Histidine biosynthesis</keyword>
<keyword id="KW-0663">Pyridoxal phosphate</keyword>
<keyword id="KW-0808">Transferase</keyword>